<accession>C1H8L1</accession>
<feature type="chain" id="PRO_0000406728" description="Pentafunctional AROM polypeptide">
    <location>
        <begin position="1"/>
        <end position="1598"/>
    </location>
</feature>
<feature type="region of interest" description="3-dehydroquinate synthase">
    <location>
        <begin position="1"/>
        <end position="384"/>
    </location>
</feature>
<feature type="region of interest" description="EPSP synthase">
    <location>
        <begin position="397"/>
        <end position="842"/>
    </location>
</feature>
<feature type="region of interest" description="Shikimate kinase">
    <location>
        <begin position="867"/>
        <end position="1059"/>
    </location>
</feature>
<feature type="region of interest" description="3-dehydroquinase">
    <location>
        <begin position="1060"/>
        <end position="1280"/>
    </location>
</feature>
<feature type="region of interest" description="Shikimate dehydrogenase">
    <location>
        <begin position="1293"/>
        <end position="1598"/>
    </location>
</feature>
<feature type="active site" description="Proton acceptor; for 3-dehydroquinate synthase activity" evidence="1">
    <location>
        <position position="260"/>
    </location>
</feature>
<feature type="active site" description="Proton acceptor; for 3-dehydroquinate synthase activity" evidence="1">
    <location>
        <position position="275"/>
    </location>
</feature>
<feature type="active site" description="For EPSP synthase activity" evidence="1">
    <location>
        <position position="824"/>
    </location>
</feature>
<feature type="active site" description="Proton acceptor; for 3-dehydroquinate dehydratase activity" evidence="1">
    <location>
        <position position="1183"/>
    </location>
</feature>
<feature type="active site" description="Schiff-base intermediate with substrate; for 3-dehydroquinate dehydratase activity" evidence="1">
    <location>
        <position position="1211"/>
    </location>
</feature>
<feature type="binding site" evidence="1">
    <location>
        <begin position="44"/>
        <end position="46"/>
    </location>
    <ligand>
        <name>NAD(+)</name>
        <dbReference type="ChEBI" id="CHEBI:57540"/>
    </ligand>
</feature>
<feature type="binding site" evidence="1">
    <location>
        <begin position="81"/>
        <end position="84"/>
    </location>
    <ligand>
        <name>NAD(+)</name>
        <dbReference type="ChEBI" id="CHEBI:57540"/>
    </ligand>
</feature>
<feature type="binding site" evidence="1">
    <location>
        <begin position="114"/>
        <end position="116"/>
    </location>
    <ligand>
        <name>NAD(+)</name>
        <dbReference type="ChEBI" id="CHEBI:57540"/>
    </ligand>
</feature>
<feature type="binding site" evidence="1">
    <location>
        <position position="119"/>
    </location>
    <ligand>
        <name>NAD(+)</name>
        <dbReference type="ChEBI" id="CHEBI:57540"/>
    </ligand>
</feature>
<feature type="binding site" evidence="1">
    <location>
        <position position="130"/>
    </location>
    <ligand>
        <name>7-phospho-2-dehydro-3-deoxy-D-arabino-heptonate</name>
        <dbReference type="ChEBI" id="CHEBI:58394"/>
    </ligand>
</feature>
<feature type="binding site" evidence="1">
    <location>
        <begin position="139"/>
        <end position="140"/>
    </location>
    <ligand>
        <name>NAD(+)</name>
        <dbReference type="ChEBI" id="CHEBI:57540"/>
    </ligand>
</feature>
<feature type="binding site" evidence="1">
    <location>
        <position position="146"/>
    </location>
    <ligand>
        <name>7-phospho-2-dehydro-3-deoxy-D-arabino-heptonate</name>
        <dbReference type="ChEBI" id="CHEBI:58394"/>
    </ligand>
</feature>
<feature type="binding site" evidence="1">
    <location>
        <position position="152"/>
    </location>
    <ligand>
        <name>7-phospho-2-dehydro-3-deoxy-D-arabino-heptonate</name>
        <dbReference type="ChEBI" id="CHEBI:58394"/>
    </ligand>
</feature>
<feature type="binding site" evidence="1">
    <location>
        <position position="161"/>
    </location>
    <ligand>
        <name>NAD(+)</name>
        <dbReference type="ChEBI" id="CHEBI:57540"/>
    </ligand>
</feature>
<feature type="binding site" evidence="1">
    <location>
        <position position="162"/>
    </location>
    <ligand>
        <name>7-phospho-2-dehydro-3-deoxy-D-arabino-heptonate</name>
        <dbReference type="ChEBI" id="CHEBI:58394"/>
    </ligand>
</feature>
<feature type="binding site" evidence="1">
    <location>
        <begin position="179"/>
        <end position="182"/>
    </location>
    <ligand>
        <name>NAD(+)</name>
        <dbReference type="ChEBI" id="CHEBI:57540"/>
    </ligand>
</feature>
<feature type="binding site" evidence="1">
    <location>
        <position position="190"/>
    </location>
    <ligand>
        <name>NAD(+)</name>
        <dbReference type="ChEBI" id="CHEBI:57540"/>
    </ligand>
</feature>
<feature type="binding site" evidence="1">
    <location>
        <begin position="194"/>
        <end position="197"/>
    </location>
    <ligand>
        <name>7-phospho-2-dehydro-3-deoxy-D-arabino-heptonate</name>
        <dbReference type="ChEBI" id="CHEBI:58394"/>
    </ligand>
</feature>
<feature type="binding site" evidence="1">
    <location>
        <position position="194"/>
    </location>
    <ligand>
        <name>Zn(2+)</name>
        <dbReference type="ChEBI" id="CHEBI:29105"/>
        <note>catalytic</note>
    </ligand>
</feature>
<feature type="binding site" evidence="1">
    <location>
        <position position="250"/>
    </location>
    <ligand>
        <name>7-phospho-2-dehydro-3-deoxy-D-arabino-heptonate</name>
        <dbReference type="ChEBI" id="CHEBI:58394"/>
    </ligand>
</feature>
<feature type="binding site" evidence="1">
    <location>
        <begin position="264"/>
        <end position="268"/>
    </location>
    <ligand>
        <name>7-phospho-2-dehydro-3-deoxy-D-arabino-heptonate</name>
        <dbReference type="ChEBI" id="CHEBI:58394"/>
    </ligand>
</feature>
<feature type="binding site" evidence="1">
    <location>
        <position position="271"/>
    </location>
    <ligand>
        <name>7-phospho-2-dehydro-3-deoxy-D-arabino-heptonate</name>
        <dbReference type="ChEBI" id="CHEBI:58394"/>
    </ligand>
</feature>
<feature type="binding site" evidence="1">
    <location>
        <position position="271"/>
    </location>
    <ligand>
        <name>Zn(2+)</name>
        <dbReference type="ChEBI" id="CHEBI:29105"/>
        <note>catalytic</note>
    </ligand>
</feature>
<feature type="binding site" evidence="1">
    <location>
        <position position="287"/>
    </location>
    <ligand>
        <name>7-phospho-2-dehydro-3-deoxy-D-arabino-heptonate</name>
        <dbReference type="ChEBI" id="CHEBI:58394"/>
    </ligand>
</feature>
<feature type="binding site" evidence="1">
    <location>
        <position position="287"/>
    </location>
    <ligand>
        <name>Zn(2+)</name>
        <dbReference type="ChEBI" id="CHEBI:29105"/>
        <note>catalytic</note>
    </ligand>
</feature>
<feature type="binding site" evidence="1">
    <location>
        <position position="356"/>
    </location>
    <ligand>
        <name>7-phospho-2-dehydro-3-deoxy-D-arabino-heptonate</name>
        <dbReference type="ChEBI" id="CHEBI:58394"/>
    </ligand>
</feature>
<feature type="binding site" evidence="1">
    <location>
        <begin position="874"/>
        <end position="881"/>
    </location>
    <ligand>
        <name>ATP</name>
        <dbReference type="ChEBI" id="CHEBI:30616"/>
    </ligand>
</feature>
<gene>
    <name type="ORF">PAAG_07102</name>
</gene>
<protein>
    <recommendedName>
        <fullName evidence="1">Pentafunctional AROM polypeptide</fullName>
    </recommendedName>
    <domain>
        <recommendedName>
            <fullName evidence="1">3-dehydroquinate synthase</fullName>
            <shortName evidence="1">DHQS</shortName>
            <ecNumber evidence="1">4.2.3.4</ecNumber>
        </recommendedName>
    </domain>
    <domain>
        <recommendedName>
            <fullName evidence="1">3-phosphoshikimate 1-carboxyvinyltransferase</fullName>
            <ecNumber evidence="1">2.5.1.19</ecNumber>
        </recommendedName>
        <alternativeName>
            <fullName evidence="1">5-enolpyruvylshikimate-3-phosphate synthase</fullName>
            <shortName evidence="1">EPSP synthase</shortName>
            <shortName evidence="1">EPSPS</shortName>
        </alternativeName>
    </domain>
    <domain>
        <recommendedName>
            <fullName evidence="1">Shikimate kinase</fullName>
            <shortName evidence="1">SK</shortName>
            <ecNumber evidence="1">2.7.1.71</ecNumber>
        </recommendedName>
    </domain>
    <domain>
        <recommendedName>
            <fullName evidence="1">3-dehydroquinate dehydratase</fullName>
            <shortName evidence="1">3-dehydroquinase</shortName>
            <ecNumber evidence="1">4.2.1.10</ecNumber>
        </recommendedName>
    </domain>
    <domain>
        <recommendedName>
            <fullName evidence="1">Shikimate dehydrogenase</fullName>
            <ecNumber evidence="1">1.1.1.25</ecNumber>
        </recommendedName>
    </domain>
</protein>
<name>ARO1_PARBA</name>
<keyword id="KW-0028">Amino-acid biosynthesis</keyword>
<keyword id="KW-0057">Aromatic amino acid biosynthesis</keyword>
<keyword id="KW-0067">ATP-binding</keyword>
<keyword id="KW-0963">Cytoplasm</keyword>
<keyword id="KW-0418">Kinase</keyword>
<keyword id="KW-0456">Lyase</keyword>
<keyword id="KW-0479">Metal-binding</keyword>
<keyword id="KW-0511">Multifunctional enzyme</keyword>
<keyword id="KW-0521">NADP</keyword>
<keyword id="KW-0547">Nucleotide-binding</keyword>
<keyword id="KW-0560">Oxidoreductase</keyword>
<keyword id="KW-1185">Reference proteome</keyword>
<keyword id="KW-0808">Transferase</keyword>
<keyword id="KW-0862">Zinc</keyword>
<evidence type="ECO:0000255" key="1">
    <source>
        <dbReference type="HAMAP-Rule" id="MF_03143"/>
    </source>
</evidence>
<reference key="1">
    <citation type="journal article" date="2011" name="PLoS Genet.">
        <title>Comparative genomic analysis of human fungal pathogens causing paracoccidioidomycosis.</title>
        <authorList>
            <person name="Desjardins C.A."/>
            <person name="Champion M.D."/>
            <person name="Holder J.W."/>
            <person name="Muszewska A."/>
            <person name="Goldberg J."/>
            <person name="Bailao A.M."/>
            <person name="Brigido M.M."/>
            <person name="Ferreira M.E."/>
            <person name="Garcia A.M."/>
            <person name="Grynberg M."/>
            <person name="Gujja S."/>
            <person name="Heiman D.I."/>
            <person name="Henn M.R."/>
            <person name="Kodira C.D."/>
            <person name="Leon-Narvaez H."/>
            <person name="Longo L.V.G."/>
            <person name="Ma L.-J."/>
            <person name="Malavazi I."/>
            <person name="Matsuo A.L."/>
            <person name="Morais F.V."/>
            <person name="Pereira M."/>
            <person name="Rodriguez-Brito S."/>
            <person name="Sakthikumar S."/>
            <person name="Salem-Izacc S.M."/>
            <person name="Sykes S.M."/>
            <person name="Teixeira M.M."/>
            <person name="Vallejo M.C."/>
            <person name="Walter M.E."/>
            <person name="Yandava C."/>
            <person name="Young S."/>
            <person name="Zeng Q."/>
            <person name="Zucker J."/>
            <person name="Felipe M.S."/>
            <person name="Goldman G.H."/>
            <person name="Haas B.J."/>
            <person name="McEwen J.G."/>
            <person name="Nino-Vega G."/>
            <person name="Puccia R."/>
            <person name="San-Blas G."/>
            <person name="Soares C.M."/>
            <person name="Birren B.W."/>
            <person name="Cuomo C.A."/>
        </authorList>
    </citation>
    <scope>NUCLEOTIDE SEQUENCE [LARGE SCALE GENOMIC DNA]</scope>
    <source>
        <strain>ATCC MYA-826 / Pb01</strain>
    </source>
</reference>
<sequence>MGVPTKISILGRESIVADFGIWRNYVAKDLLSSCASSTYILISDTNLTPLYLAGFQQSFENAAAGLSPKPRLLTYEIPPGESSKSRETKADIEDWMLTRQPPCGRDTVIIALGGGVIGDLIGFVAATYMRGVRFVQVPTTLLAMVDSSIGGKTAIDTPNGKNLIGAIWQPQRIYLDMEFLNTLPEREFINGMAEVIKTAAISSEEKFAALENDADVILAAVKSKNTPERLRFSNIQETLKRTILSSAEFKAQVVSADEREGGLRNLLNFGHSIGHAIEAILAPQVLHGECVSIGMVKEAELARHLGILNNVSVARIVKCLASYELPTSLKDERIKRLTAGKHCSVEQIIAYMGVDKKNDGPKKKVVLLSAIGRTYEPRACTVSNEDLQVVLAPSIEVYPGFPKSLNVTCTPPGSKSISNRALVLAALGSGTCRIKNLLHSDDTEVMLTALERLGAATFSWENQGEVLVVNGNGGRMVASPKELYLGNAGTASRFLTTVATLAQNGSVASSVLTGNARMKQRPIGDLVDALKANGADIEYLENPKSLPLKITASGGFAGGEIRLSAKVSSQYVSSLLMCAPYAKEPVTLRLVGGNPVSQLYIDMTTAMMRSFGIDVKKSETEEHTYHIPRGVYKNPAEYVVESDASSATYPLAIAAMTGTSCTVPNIGSKSLQGDARFAIDVLRPMGCTVNQTDFSTSVTGPAGGKLKSIPTIDMEPMTDAFLTASVLAAVARGQGSNHTTRICGIANQRVKECNRIKAMKDELAKFGVTCREHDDGLEIDGIDRSTLCHPPEGVFCYDDHRVAMSFSILALAAEQPTLILEKECVGKTWPGWWDTLAQTFKVKLDGKEVEVEEKAETNGVAHVDKSAASIFIIGMRGAGKTTSGVWVSKALQRPFIDLDDELEKNEGMTIPEMIKQRGWEGFRDSELALLRRVMTEKPMGYIFACGGGVVELPEARELLTQYHKTKGNVILAMRDIKEVMDFLKIDKTRPAYVEDMMSVWLRRKPWYQECSNIQYYSRITQPDGMAQVLHGFNRFLKVITGKLDSLAQMRRKENTFFVSLTFPDLTPASNILKEVTLGSDAVELRVDLLKDPQSDSEIPSVDYVAEQISVLRSRVSVPLVFTIRTKSQGGRFPDDAYDAALRLYCLAIRMGSEFVDLELSFPEQLLRTVTEMKGFSKIIASHHDPEGLLSWANGSWIQIYNKALQYGDVIKLVGVAKTLDDNASLKKFKTWAEAKHDVPLIAINMGYKGQLSRILNGFMTPVSHPGLPFKAAPGQLSAREIRKGLSLMGEIKAKKFAVIGKPVSSSRSPAMHNALFKQMGLPHTYGRIETDNPEDVKEFIRSPDFGGASVTIPLKLDIMPLLDEIAPEAEMIGAVNTIVSVPAAPGDKSQSSRLIGRNTDWQGMVRCLSDAGAYSAATPTTSSAGLIIGGGGTARAAIFALNSMSYSPIYIVGRSPEKLACMASSFPADYNIRIVDDVKALESLPMVAIGTIPGDKPIELHMREVLCEILSLCEKANVEAERRTGITPKRILLEMAYKPSVTSLMKLASDAGWTVLPGLEVLVAQGVYQSEYWTDITPVYENARKAVMGVSSSDDIIS</sequence>
<organism>
    <name type="scientific">Paracoccidioides lutzii (strain ATCC MYA-826 / Pb01)</name>
    <name type="common">Paracoccidioides brasiliensis</name>
    <dbReference type="NCBI Taxonomy" id="502779"/>
    <lineage>
        <taxon>Eukaryota</taxon>
        <taxon>Fungi</taxon>
        <taxon>Dikarya</taxon>
        <taxon>Ascomycota</taxon>
        <taxon>Pezizomycotina</taxon>
        <taxon>Eurotiomycetes</taxon>
        <taxon>Eurotiomycetidae</taxon>
        <taxon>Onygenales</taxon>
        <taxon>Ajellomycetaceae</taxon>
        <taxon>Paracoccidioides</taxon>
    </lineage>
</organism>
<proteinExistence type="inferred from homology"/>
<comment type="function">
    <text evidence="1">The AROM polypeptide catalyzes 5 consecutive enzymatic reactions in prechorismate polyaromatic amino acid biosynthesis.</text>
</comment>
<comment type="catalytic activity">
    <reaction evidence="1">
        <text>7-phospho-2-dehydro-3-deoxy-D-arabino-heptonate = 3-dehydroquinate + phosphate</text>
        <dbReference type="Rhea" id="RHEA:21968"/>
        <dbReference type="ChEBI" id="CHEBI:32364"/>
        <dbReference type="ChEBI" id="CHEBI:43474"/>
        <dbReference type="ChEBI" id="CHEBI:58394"/>
        <dbReference type="EC" id="4.2.3.4"/>
    </reaction>
</comment>
<comment type="catalytic activity">
    <reaction evidence="1">
        <text>3-dehydroquinate = 3-dehydroshikimate + H2O</text>
        <dbReference type="Rhea" id="RHEA:21096"/>
        <dbReference type="ChEBI" id="CHEBI:15377"/>
        <dbReference type="ChEBI" id="CHEBI:16630"/>
        <dbReference type="ChEBI" id="CHEBI:32364"/>
        <dbReference type="EC" id="4.2.1.10"/>
    </reaction>
</comment>
<comment type="catalytic activity">
    <reaction evidence="1">
        <text>shikimate + NADP(+) = 3-dehydroshikimate + NADPH + H(+)</text>
        <dbReference type="Rhea" id="RHEA:17737"/>
        <dbReference type="ChEBI" id="CHEBI:15378"/>
        <dbReference type="ChEBI" id="CHEBI:16630"/>
        <dbReference type="ChEBI" id="CHEBI:36208"/>
        <dbReference type="ChEBI" id="CHEBI:57783"/>
        <dbReference type="ChEBI" id="CHEBI:58349"/>
        <dbReference type="EC" id="1.1.1.25"/>
    </reaction>
</comment>
<comment type="catalytic activity">
    <reaction evidence="1">
        <text>shikimate + ATP = 3-phosphoshikimate + ADP + H(+)</text>
        <dbReference type="Rhea" id="RHEA:13121"/>
        <dbReference type="ChEBI" id="CHEBI:15378"/>
        <dbReference type="ChEBI" id="CHEBI:30616"/>
        <dbReference type="ChEBI" id="CHEBI:36208"/>
        <dbReference type="ChEBI" id="CHEBI:145989"/>
        <dbReference type="ChEBI" id="CHEBI:456216"/>
        <dbReference type="EC" id="2.7.1.71"/>
    </reaction>
</comment>
<comment type="catalytic activity">
    <reaction evidence="1">
        <text>3-phosphoshikimate + phosphoenolpyruvate = 5-O-(1-carboxyvinyl)-3-phosphoshikimate + phosphate</text>
        <dbReference type="Rhea" id="RHEA:21256"/>
        <dbReference type="ChEBI" id="CHEBI:43474"/>
        <dbReference type="ChEBI" id="CHEBI:57701"/>
        <dbReference type="ChEBI" id="CHEBI:58702"/>
        <dbReference type="ChEBI" id="CHEBI:145989"/>
        <dbReference type="EC" id="2.5.1.19"/>
    </reaction>
</comment>
<comment type="cofactor">
    <cofactor>
        <name>Zn(2+)</name>
        <dbReference type="ChEBI" id="CHEBI:29105"/>
    </cofactor>
    <text>Binds 2 Zn(2+) ions per subunit.</text>
</comment>
<comment type="pathway">
    <text evidence="1">Metabolic intermediate biosynthesis; chorismate biosynthesis; chorismate from D-erythrose 4-phosphate and phosphoenolpyruvate: step 2/7.</text>
</comment>
<comment type="pathway">
    <text evidence="1">Metabolic intermediate biosynthesis; chorismate biosynthesis; chorismate from D-erythrose 4-phosphate and phosphoenolpyruvate: step 3/7.</text>
</comment>
<comment type="pathway">
    <text evidence="1">Metabolic intermediate biosynthesis; chorismate biosynthesis; chorismate from D-erythrose 4-phosphate and phosphoenolpyruvate: step 4/7.</text>
</comment>
<comment type="pathway">
    <text evidence="1">Metabolic intermediate biosynthesis; chorismate biosynthesis; chorismate from D-erythrose 4-phosphate and phosphoenolpyruvate: step 5/7.</text>
</comment>
<comment type="pathway">
    <text evidence="1">Metabolic intermediate biosynthesis; chorismate biosynthesis; chorismate from D-erythrose 4-phosphate and phosphoenolpyruvate: step 6/7.</text>
</comment>
<comment type="subunit">
    <text evidence="1">Homodimer.</text>
</comment>
<comment type="subcellular location">
    <subcellularLocation>
        <location evidence="1">Cytoplasm</location>
    </subcellularLocation>
</comment>
<comment type="similarity">
    <text evidence="1">In the N-terminal section; belongs to the sugar phosphate cyclases superfamily. Dehydroquinate synthase family.</text>
</comment>
<comment type="similarity">
    <text evidence="1">In the 2nd section; belongs to the EPSP synthase family.</text>
</comment>
<comment type="similarity">
    <text evidence="1">In the 3rd section; belongs to the shikimate kinase family.</text>
</comment>
<comment type="similarity">
    <text evidence="1">In the 4th section; belongs to the type-I 3-dehydroquinase family.</text>
</comment>
<comment type="similarity">
    <text evidence="1">In the C-terminal section; belongs to the shikimate dehydrogenase family.</text>
</comment>
<dbReference type="EC" id="4.2.3.4" evidence="1"/>
<dbReference type="EC" id="2.5.1.19" evidence="1"/>
<dbReference type="EC" id="2.7.1.71" evidence="1"/>
<dbReference type="EC" id="4.2.1.10" evidence="1"/>
<dbReference type="EC" id="1.1.1.25" evidence="1"/>
<dbReference type="EMBL" id="KN294013">
    <property type="protein sequence ID" value="EEH36684.2"/>
    <property type="molecule type" value="Genomic_DNA"/>
</dbReference>
<dbReference type="RefSeq" id="XP_015700561.1">
    <property type="nucleotide sequence ID" value="XM_015846126.1"/>
</dbReference>
<dbReference type="SMR" id="C1H8L1"/>
<dbReference type="STRING" id="502779.C1H8L1"/>
<dbReference type="GeneID" id="9094185"/>
<dbReference type="KEGG" id="pbl:PAAG_07102"/>
<dbReference type="VEuPathDB" id="FungiDB:PAAG_07102"/>
<dbReference type="eggNOG" id="KOG0692">
    <property type="taxonomic scope" value="Eukaryota"/>
</dbReference>
<dbReference type="HOGENOM" id="CLU_001201_1_2_1"/>
<dbReference type="OMA" id="SWANMSW"/>
<dbReference type="OrthoDB" id="197068at2759"/>
<dbReference type="UniPathway" id="UPA00053">
    <property type="reaction ID" value="UER00085"/>
</dbReference>
<dbReference type="UniPathway" id="UPA00053">
    <property type="reaction ID" value="UER00086"/>
</dbReference>
<dbReference type="UniPathway" id="UPA00053">
    <property type="reaction ID" value="UER00087"/>
</dbReference>
<dbReference type="UniPathway" id="UPA00053">
    <property type="reaction ID" value="UER00088"/>
</dbReference>
<dbReference type="UniPathway" id="UPA00053">
    <property type="reaction ID" value="UER00089"/>
</dbReference>
<dbReference type="Proteomes" id="UP000002059">
    <property type="component" value="Partially assembled WGS sequence"/>
</dbReference>
<dbReference type="GO" id="GO:0005737">
    <property type="term" value="C:cytoplasm"/>
    <property type="evidence" value="ECO:0007669"/>
    <property type="project" value="UniProtKB-SubCell"/>
</dbReference>
<dbReference type="GO" id="GO:0003855">
    <property type="term" value="F:3-dehydroquinate dehydratase activity"/>
    <property type="evidence" value="ECO:0007669"/>
    <property type="project" value="UniProtKB-UniRule"/>
</dbReference>
<dbReference type="GO" id="GO:0003856">
    <property type="term" value="F:3-dehydroquinate synthase activity"/>
    <property type="evidence" value="ECO:0007669"/>
    <property type="project" value="UniProtKB-UniRule"/>
</dbReference>
<dbReference type="GO" id="GO:0003866">
    <property type="term" value="F:3-phosphoshikimate 1-carboxyvinyltransferase activity"/>
    <property type="evidence" value="ECO:0007669"/>
    <property type="project" value="UniProtKB-UniRule"/>
</dbReference>
<dbReference type="GO" id="GO:0005524">
    <property type="term" value="F:ATP binding"/>
    <property type="evidence" value="ECO:0007669"/>
    <property type="project" value="UniProtKB-UniRule"/>
</dbReference>
<dbReference type="GO" id="GO:0046872">
    <property type="term" value="F:metal ion binding"/>
    <property type="evidence" value="ECO:0007669"/>
    <property type="project" value="UniProtKB-UniRule"/>
</dbReference>
<dbReference type="GO" id="GO:0004764">
    <property type="term" value="F:shikimate 3-dehydrogenase (NADP+) activity"/>
    <property type="evidence" value="ECO:0007669"/>
    <property type="project" value="UniProtKB-UniRule"/>
</dbReference>
<dbReference type="GO" id="GO:0004765">
    <property type="term" value="F:shikimate kinase activity"/>
    <property type="evidence" value="ECO:0007669"/>
    <property type="project" value="UniProtKB-UniRule"/>
</dbReference>
<dbReference type="GO" id="GO:0008652">
    <property type="term" value="P:amino acid biosynthetic process"/>
    <property type="evidence" value="ECO:0007669"/>
    <property type="project" value="UniProtKB-KW"/>
</dbReference>
<dbReference type="GO" id="GO:0009073">
    <property type="term" value="P:aromatic amino acid family biosynthetic process"/>
    <property type="evidence" value="ECO:0007669"/>
    <property type="project" value="UniProtKB-UniRule"/>
</dbReference>
<dbReference type="GO" id="GO:0009423">
    <property type="term" value="P:chorismate biosynthetic process"/>
    <property type="evidence" value="ECO:0007669"/>
    <property type="project" value="UniProtKB-UniRule"/>
</dbReference>
<dbReference type="CDD" id="cd00502">
    <property type="entry name" value="DHQase_I"/>
    <property type="match status" value="1"/>
</dbReference>
<dbReference type="CDD" id="cd08195">
    <property type="entry name" value="DHQS"/>
    <property type="match status" value="1"/>
</dbReference>
<dbReference type="CDD" id="cd01556">
    <property type="entry name" value="EPSP_synthase"/>
    <property type="match status" value="1"/>
</dbReference>
<dbReference type="CDD" id="cd01065">
    <property type="entry name" value="NAD_bind_Shikimate_DH"/>
    <property type="match status" value="1"/>
</dbReference>
<dbReference type="CDD" id="cd00464">
    <property type="entry name" value="SK"/>
    <property type="match status" value="1"/>
</dbReference>
<dbReference type="FunFam" id="1.20.1090.10:FF:000007">
    <property type="entry name" value="Pentafunctional AROM polypeptide"/>
    <property type="match status" value="1"/>
</dbReference>
<dbReference type="FunFam" id="3.20.20.70:FF:000135">
    <property type="entry name" value="Pentafunctional AROM polypeptide"/>
    <property type="match status" value="1"/>
</dbReference>
<dbReference type="FunFam" id="3.40.50.1970:FF:000007">
    <property type="entry name" value="Pentafunctional AROM polypeptide"/>
    <property type="match status" value="1"/>
</dbReference>
<dbReference type="FunFam" id="3.40.50.300:FF:001256">
    <property type="entry name" value="Pentafunctional AROM polypeptide"/>
    <property type="match status" value="1"/>
</dbReference>
<dbReference type="FunFam" id="3.65.10.10:FF:000007">
    <property type="entry name" value="Pentafunctional AROM polypeptide"/>
    <property type="match status" value="1"/>
</dbReference>
<dbReference type="FunFam" id="3.65.10.10:FF:000008">
    <property type="entry name" value="Pentafunctional AROM polypeptide"/>
    <property type="match status" value="1"/>
</dbReference>
<dbReference type="Gene3D" id="3.40.50.1970">
    <property type="match status" value="1"/>
</dbReference>
<dbReference type="Gene3D" id="3.20.20.70">
    <property type="entry name" value="Aldolase class I"/>
    <property type="match status" value="1"/>
</dbReference>
<dbReference type="Gene3D" id="1.20.1090.10">
    <property type="entry name" value="Dehydroquinate synthase-like - alpha domain"/>
    <property type="match status" value="1"/>
</dbReference>
<dbReference type="Gene3D" id="3.65.10.10">
    <property type="entry name" value="Enolpyruvate transferase domain"/>
    <property type="match status" value="2"/>
</dbReference>
<dbReference type="Gene3D" id="3.40.50.10860">
    <property type="entry name" value="Leucine Dehydrogenase, chain A, domain 1"/>
    <property type="match status" value="1"/>
</dbReference>
<dbReference type="Gene3D" id="3.40.50.720">
    <property type="entry name" value="NAD(P)-binding Rossmann-like Domain"/>
    <property type="match status" value="1"/>
</dbReference>
<dbReference type="Gene3D" id="3.40.50.300">
    <property type="entry name" value="P-loop containing nucleotide triphosphate hydrolases"/>
    <property type="match status" value="1"/>
</dbReference>
<dbReference type="HAMAP" id="MF_00210">
    <property type="entry name" value="EPSP_synth"/>
    <property type="match status" value="1"/>
</dbReference>
<dbReference type="HAMAP" id="MF_03143">
    <property type="entry name" value="Pentafunct_AroM"/>
    <property type="match status" value="1"/>
</dbReference>
<dbReference type="HAMAP" id="MF_00109">
    <property type="entry name" value="Shikimate_kinase"/>
    <property type="match status" value="1"/>
</dbReference>
<dbReference type="InterPro" id="IPR018508">
    <property type="entry name" value="3-dehydroquinate_DH_AS"/>
</dbReference>
<dbReference type="InterPro" id="IPR013785">
    <property type="entry name" value="Aldolase_TIM"/>
</dbReference>
<dbReference type="InterPro" id="IPR046346">
    <property type="entry name" value="Aminoacid_DH-like_N_sf"/>
</dbReference>
<dbReference type="InterPro" id="IPR016037">
    <property type="entry name" value="DHQ_synth_AroB"/>
</dbReference>
<dbReference type="InterPro" id="IPR030960">
    <property type="entry name" value="DHQS/DOIS_N"/>
</dbReference>
<dbReference type="InterPro" id="IPR056179">
    <property type="entry name" value="DHQS_C"/>
</dbReference>
<dbReference type="InterPro" id="IPR001381">
    <property type="entry name" value="DHquinase_I"/>
</dbReference>
<dbReference type="InterPro" id="IPR001986">
    <property type="entry name" value="Enolpyruvate_Tfrase_dom"/>
</dbReference>
<dbReference type="InterPro" id="IPR036968">
    <property type="entry name" value="Enolpyruvate_Tfrase_sf"/>
</dbReference>
<dbReference type="InterPro" id="IPR006264">
    <property type="entry name" value="EPSP_synthase"/>
</dbReference>
<dbReference type="InterPro" id="IPR023193">
    <property type="entry name" value="EPSP_synthase_CS"/>
</dbReference>
<dbReference type="InterPro" id="IPR036291">
    <property type="entry name" value="NAD(P)-bd_dom_sf"/>
</dbReference>
<dbReference type="InterPro" id="IPR027417">
    <property type="entry name" value="P-loop_NTPase"/>
</dbReference>
<dbReference type="InterPro" id="IPR008289">
    <property type="entry name" value="Pentafunct_AroM"/>
</dbReference>
<dbReference type="InterPro" id="IPR013792">
    <property type="entry name" value="RNA3'P_cycl/enolpyr_Trfase_a/b"/>
</dbReference>
<dbReference type="InterPro" id="IPR031322">
    <property type="entry name" value="Shikimate/glucono_kinase"/>
</dbReference>
<dbReference type="InterPro" id="IPR013708">
    <property type="entry name" value="Shikimate_DH-bd_N"/>
</dbReference>
<dbReference type="InterPro" id="IPR010110">
    <property type="entry name" value="Shikimate_DH_AroM-type"/>
</dbReference>
<dbReference type="InterPro" id="IPR000623">
    <property type="entry name" value="Shikimate_kinase/TSH1"/>
</dbReference>
<dbReference type="InterPro" id="IPR023000">
    <property type="entry name" value="Shikimate_kinase_CS"/>
</dbReference>
<dbReference type="NCBIfam" id="TIGR01356">
    <property type="entry name" value="aroA"/>
    <property type="match status" value="1"/>
</dbReference>
<dbReference type="NCBIfam" id="TIGR01357">
    <property type="entry name" value="aroB"/>
    <property type="match status" value="1"/>
</dbReference>
<dbReference type="NCBIfam" id="TIGR01093">
    <property type="entry name" value="aroD"/>
    <property type="match status" value="1"/>
</dbReference>
<dbReference type="NCBIfam" id="TIGR01809">
    <property type="entry name" value="Shik-DH-AROM"/>
    <property type="match status" value="1"/>
</dbReference>
<dbReference type="PANTHER" id="PTHR21090">
    <property type="entry name" value="AROM/DEHYDROQUINATE SYNTHASE"/>
    <property type="match status" value="1"/>
</dbReference>
<dbReference type="PANTHER" id="PTHR21090:SF5">
    <property type="entry name" value="PENTAFUNCTIONAL AROM POLYPEPTIDE"/>
    <property type="match status" value="1"/>
</dbReference>
<dbReference type="Pfam" id="PF01761">
    <property type="entry name" value="DHQ_synthase"/>
    <property type="match status" value="1"/>
</dbReference>
<dbReference type="Pfam" id="PF24621">
    <property type="entry name" value="DHQS_C"/>
    <property type="match status" value="1"/>
</dbReference>
<dbReference type="Pfam" id="PF01487">
    <property type="entry name" value="DHquinase_I"/>
    <property type="match status" value="1"/>
</dbReference>
<dbReference type="Pfam" id="PF00275">
    <property type="entry name" value="EPSP_synthase"/>
    <property type="match status" value="1"/>
</dbReference>
<dbReference type="Pfam" id="PF08501">
    <property type="entry name" value="Shikimate_dh_N"/>
    <property type="match status" value="1"/>
</dbReference>
<dbReference type="Pfam" id="PF01202">
    <property type="entry name" value="SKI"/>
    <property type="match status" value="1"/>
</dbReference>
<dbReference type="PIRSF" id="PIRSF000514">
    <property type="entry name" value="Pentafunct_AroM"/>
    <property type="match status" value="1"/>
</dbReference>
<dbReference type="PRINTS" id="PR01100">
    <property type="entry name" value="SHIKIMTKNASE"/>
</dbReference>
<dbReference type="SUPFAM" id="SSF51569">
    <property type="entry name" value="Aldolase"/>
    <property type="match status" value="1"/>
</dbReference>
<dbReference type="SUPFAM" id="SSF53223">
    <property type="entry name" value="Aminoacid dehydrogenase-like, N-terminal domain"/>
    <property type="match status" value="1"/>
</dbReference>
<dbReference type="SUPFAM" id="SSF56796">
    <property type="entry name" value="Dehydroquinate synthase-like"/>
    <property type="match status" value="1"/>
</dbReference>
<dbReference type="SUPFAM" id="SSF55205">
    <property type="entry name" value="EPT/RTPC-like"/>
    <property type="match status" value="1"/>
</dbReference>
<dbReference type="SUPFAM" id="SSF51735">
    <property type="entry name" value="NAD(P)-binding Rossmann-fold domains"/>
    <property type="match status" value="1"/>
</dbReference>
<dbReference type="SUPFAM" id="SSF52540">
    <property type="entry name" value="P-loop containing nucleoside triphosphate hydrolases"/>
    <property type="match status" value="1"/>
</dbReference>
<dbReference type="PROSITE" id="PS01028">
    <property type="entry name" value="DEHYDROQUINASE_I"/>
    <property type="match status" value="1"/>
</dbReference>
<dbReference type="PROSITE" id="PS00104">
    <property type="entry name" value="EPSP_SYNTHASE_1"/>
    <property type="match status" value="1"/>
</dbReference>
<dbReference type="PROSITE" id="PS00885">
    <property type="entry name" value="EPSP_SYNTHASE_2"/>
    <property type="match status" value="1"/>
</dbReference>
<dbReference type="PROSITE" id="PS01128">
    <property type="entry name" value="SHIKIMATE_KINASE"/>
    <property type="match status" value="1"/>
</dbReference>